<organism>
    <name type="scientific">Vibrio parahaemolyticus serotype O3:K6 (strain RIMD 2210633)</name>
    <dbReference type="NCBI Taxonomy" id="223926"/>
    <lineage>
        <taxon>Bacteria</taxon>
        <taxon>Pseudomonadati</taxon>
        <taxon>Pseudomonadota</taxon>
        <taxon>Gammaproteobacteria</taxon>
        <taxon>Vibrionales</taxon>
        <taxon>Vibrionaceae</taxon>
        <taxon>Vibrio</taxon>
    </lineage>
</organism>
<gene>
    <name evidence="1" type="primary">hmuV</name>
    <name type="ordered locus">VPA0421</name>
</gene>
<proteinExistence type="inferred from homology"/>
<feature type="chain" id="PRO_0000269637" description="Hemin import ATP-binding protein HmuV">
    <location>
        <begin position="1"/>
        <end position="260"/>
    </location>
</feature>
<feature type="domain" description="ABC transporter" evidence="1">
    <location>
        <begin position="6"/>
        <end position="242"/>
    </location>
</feature>
<feature type="binding site" evidence="1">
    <location>
        <begin position="38"/>
        <end position="45"/>
    </location>
    <ligand>
        <name>ATP</name>
        <dbReference type="ChEBI" id="CHEBI:30616"/>
    </ligand>
</feature>
<protein>
    <recommendedName>
        <fullName evidence="1">Hemin import ATP-binding protein HmuV</fullName>
        <ecNumber evidence="1">7.6.2.-</ecNumber>
    </recommendedName>
</protein>
<evidence type="ECO:0000255" key="1">
    <source>
        <dbReference type="HAMAP-Rule" id="MF_01718"/>
    </source>
</evidence>
<evidence type="ECO:0000305" key="2"/>
<reference key="1">
    <citation type="journal article" date="2003" name="Lancet">
        <title>Genome sequence of Vibrio parahaemolyticus: a pathogenic mechanism distinct from that of V. cholerae.</title>
        <authorList>
            <person name="Makino K."/>
            <person name="Oshima K."/>
            <person name="Kurokawa K."/>
            <person name="Yokoyama K."/>
            <person name="Uda T."/>
            <person name="Tagomori K."/>
            <person name="Iijima Y."/>
            <person name="Najima M."/>
            <person name="Nakano M."/>
            <person name="Yamashita A."/>
            <person name="Kubota Y."/>
            <person name="Kimura S."/>
            <person name="Yasunaga T."/>
            <person name="Honda T."/>
            <person name="Shinagawa H."/>
            <person name="Hattori M."/>
            <person name="Iida T."/>
        </authorList>
    </citation>
    <scope>NUCLEOTIDE SEQUENCE [LARGE SCALE GENOMIC DNA]</scope>
    <source>
        <strain>RIMD 2210633</strain>
    </source>
</reference>
<comment type="function">
    <text evidence="1">Part of the ABC transporter complex HmuTUV involved in hemin import. Responsible for energy coupling to the transport system.</text>
</comment>
<comment type="subunit">
    <text evidence="1">The complex is composed of two ATP-binding proteins (HmuV), two transmembrane proteins (HmuU) and a solute-binding protein (HmuT).</text>
</comment>
<comment type="subcellular location">
    <subcellularLocation>
        <location evidence="1">Cell inner membrane</location>
        <topology evidence="1">Peripheral membrane protein</topology>
    </subcellularLocation>
</comment>
<comment type="similarity">
    <text evidence="1">Belongs to the ABC transporter superfamily. Heme (hemin) importer (TC 3.A.1.14.5) family.</text>
</comment>
<comment type="sequence caution" evidence="2">
    <conflict type="erroneous initiation">
        <sequence resource="EMBL-CDS" id="BAC61764"/>
    </conflict>
</comment>
<accession>Q87J32</accession>
<keyword id="KW-0067">ATP-binding</keyword>
<keyword id="KW-0997">Cell inner membrane</keyword>
<keyword id="KW-1003">Cell membrane</keyword>
<keyword id="KW-0472">Membrane</keyword>
<keyword id="KW-0547">Nucleotide-binding</keyword>
<keyword id="KW-1278">Translocase</keyword>
<keyword id="KW-0813">Transport</keyword>
<dbReference type="EC" id="7.6.2.-" evidence="1"/>
<dbReference type="EMBL" id="BA000032">
    <property type="protein sequence ID" value="BAC61764.1"/>
    <property type="status" value="ALT_INIT"/>
    <property type="molecule type" value="Genomic_DNA"/>
</dbReference>
<dbReference type="RefSeq" id="NP_799931.2">
    <property type="nucleotide sequence ID" value="NC_004605.1"/>
</dbReference>
<dbReference type="RefSeq" id="WP_005491112.1">
    <property type="nucleotide sequence ID" value="NC_004605.1"/>
</dbReference>
<dbReference type="SMR" id="Q87J32"/>
<dbReference type="GeneID" id="1191109"/>
<dbReference type="KEGG" id="vpa:VPA0421"/>
<dbReference type="PATRIC" id="fig|223926.6.peg.3362"/>
<dbReference type="eggNOG" id="COG4559">
    <property type="taxonomic scope" value="Bacteria"/>
</dbReference>
<dbReference type="HOGENOM" id="CLU_000604_1_11_6"/>
<dbReference type="Proteomes" id="UP000002493">
    <property type="component" value="Chromosome 2"/>
</dbReference>
<dbReference type="GO" id="GO:0005886">
    <property type="term" value="C:plasma membrane"/>
    <property type="evidence" value="ECO:0007669"/>
    <property type="project" value="UniProtKB-SubCell"/>
</dbReference>
<dbReference type="GO" id="GO:0005524">
    <property type="term" value="F:ATP binding"/>
    <property type="evidence" value="ECO:0007669"/>
    <property type="project" value="UniProtKB-KW"/>
</dbReference>
<dbReference type="GO" id="GO:0016887">
    <property type="term" value="F:ATP hydrolysis activity"/>
    <property type="evidence" value="ECO:0007669"/>
    <property type="project" value="InterPro"/>
</dbReference>
<dbReference type="CDD" id="cd03214">
    <property type="entry name" value="ABC_Iron-Siderophores_B12_Hemin"/>
    <property type="match status" value="1"/>
</dbReference>
<dbReference type="Gene3D" id="3.40.50.300">
    <property type="entry name" value="P-loop containing nucleotide triphosphate hydrolases"/>
    <property type="match status" value="1"/>
</dbReference>
<dbReference type="InterPro" id="IPR003593">
    <property type="entry name" value="AAA+_ATPase"/>
</dbReference>
<dbReference type="InterPro" id="IPR003439">
    <property type="entry name" value="ABC_transporter-like_ATP-bd"/>
</dbReference>
<dbReference type="InterPro" id="IPR027417">
    <property type="entry name" value="P-loop_NTPase"/>
</dbReference>
<dbReference type="NCBIfam" id="NF010068">
    <property type="entry name" value="PRK13548.1"/>
    <property type="match status" value="1"/>
</dbReference>
<dbReference type="PANTHER" id="PTHR42794">
    <property type="entry name" value="HEMIN IMPORT ATP-BINDING PROTEIN HMUV"/>
    <property type="match status" value="1"/>
</dbReference>
<dbReference type="PANTHER" id="PTHR42794:SF1">
    <property type="entry name" value="HEMIN IMPORT ATP-BINDING PROTEIN HMUV"/>
    <property type="match status" value="1"/>
</dbReference>
<dbReference type="Pfam" id="PF00005">
    <property type="entry name" value="ABC_tran"/>
    <property type="match status" value="1"/>
</dbReference>
<dbReference type="SMART" id="SM00382">
    <property type="entry name" value="AAA"/>
    <property type="match status" value="1"/>
</dbReference>
<dbReference type="SUPFAM" id="SSF52540">
    <property type="entry name" value="P-loop containing nucleoside triphosphate hydrolases"/>
    <property type="match status" value="1"/>
</dbReference>
<dbReference type="PROSITE" id="PS50893">
    <property type="entry name" value="ABC_TRANSPORTER_2"/>
    <property type="match status" value="1"/>
</dbReference>
<dbReference type="PROSITE" id="PS51261">
    <property type="entry name" value="HMUV"/>
    <property type="match status" value="1"/>
</dbReference>
<sequence>MNHVVLSGRNISMKYGHRLVLDDISIDIRAGEVTALLGPNGAGKSTLLKLLCGEVPSHNEIDYFGEPKEAWKPEEIAKHLAMLPQHSTLTFPFLAREVVELGAIPLSLSNKETTELALHYMQKTDVLHLAESLYPALSGGEKQRLHLARVLTQLHQSGDKKILMLDEPTSALDLAHQHNTLKIAREAAKAQNAAVVVVLHDLNLASQYADRLVLLHNGKLVCDDNPWQALTPERIEQVYGYRSIVTKHPTLDFPQVHAAA</sequence>
<name>HMUV_VIBPA</name>